<accession>Q6G3F3</accession>
<organism>
    <name type="scientific">Bartonella henselae (strain ATCC 49882 / DSM 28221 / CCUG 30454 / Houston 1)</name>
    <name type="common">Rochalimaea henselae</name>
    <dbReference type="NCBI Taxonomy" id="283166"/>
    <lineage>
        <taxon>Bacteria</taxon>
        <taxon>Pseudomonadati</taxon>
        <taxon>Pseudomonadota</taxon>
        <taxon>Alphaproteobacteria</taxon>
        <taxon>Hyphomicrobiales</taxon>
        <taxon>Bartonellaceae</taxon>
        <taxon>Bartonella</taxon>
    </lineage>
</organism>
<dbReference type="EC" id="2.1.3.2" evidence="1"/>
<dbReference type="EMBL" id="BX897699">
    <property type="protein sequence ID" value="CAF27619.1"/>
    <property type="molecule type" value="Genomic_DNA"/>
</dbReference>
<dbReference type="RefSeq" id="WP_011180715.1">
    <property type="nucleotide sequence ID" value="NZ_LRIJ02000001.1"/>
</dbReference>
<dbReference type="SMR" id="Q6G3F3"/>
<dbReference type="PaxDb" id="283166-BH08200"/>
<dbReference type="EnsemblBacteria" id="CAF27619">
    <property type="protein sequence ID" value="CAF27619"/>
    <property type="gene ID" value="BH08200"/>
</dbReference>
<dbReference type="KEGG" id="bhe:BH08200"/>
<dbReference type="eggNOG" id="COG0540">
    <property type="taxonomic scope" value="Bacteria"/>
</dbReference>
<dbReference type="OrthoDB" id="9774690at2"/>
<dbReference type="UniPathway" id="UPA00070">
    <property type="reaction ID" value="UER00116"/>
</dbReference>
<dbReference type="Proteomes" id="UP000000421">
    <property type="component" value="Chromosome"/>
</dbReference>
<dbReference type="GO" id="GO:0005829">
    <property type="term" value="C:cytosol"/>
    <property type="evidence" value="ECO:0007669"/>
    <property type="project" value="TreeGrafter"/>
</dbReference>
<dbReference type="GO" id="GO:0016597">
    <property type="term" value="F:amino acid binding"/>
    <property type="evidence" value="ECO:0007669"/>
    <property type="project" value="InterPro"/>
</dbReference>
<dbReference type="GO" id="GO:0004070">
    <property type="term" value="F:aspartate carbamoyltransferase activity"/>
    <property type="evidence" value="ECO:0007669"/>
    <property type="project" value="UniProtKB-UniRule"/>
</dbReference>
<dbReference type="GO" id="GO:0006207">
    <property type="term" value="P:'de novo' pyrimidine nucleobase biosynthetic process"/>
    <property type="evidence" value="ECO:0007669"/>
    <property type="project" value="InterPro"/>
</dbReference>
<dbReference type="GO" id="GO:0044205">
    <property type="term" value="P:'de novo' UMP biosynthetic process"/>
    <property type="evidence" value="ECO:0007669"/>
    <property type="project" value="UniProtKB-UniRule"/>
</dbReference>
<dbReference type="GO" id="GO:0006520">
    <property type="term" value="P:amino acid metabolic process"/>
    <property type="evidence" value="ECO:0007669"/>
    <property type="project" value="InterPro"/>
</dbReference>
<dbReference type="FunFam" id="3.40.50.1370:FF:000007">
    <property type="entry name" value="Aspartate carbamoyltransferase"/>
    <property type="match status" value="1"/>
</dbReference>
<dbReference type="Gene3D" id="3.40.50.1370">
    <property type="entry name" value="Aspartate/ornithine carbamoyltransferase"/>
    <property type="match status" value="2"/>
</dbReference>
<dbReference type="HAMAP" id="MF_00001">
    <property type="entry name" value="Asp_carb_tr"/>
    <property type="match status" value="1"/>
</dbReference>
<dbReference type="InterPro" id="IPR006132">
    <property type="entry name" value="Asp/Orn_carbamoyltranf_P-bd"/>
</dbReference>
<dbReference type="InterPro" id="IPR006130">
    <property type="entry name" value="Asp/Orn_carbamoylTrfase"/>
</dbReference>
<dbReference type="InterPro" id="IPR036901">
    <property type="entry name" value="Asp/Orn_carbamoylTrfase_sf"/>
</dbReference>
<dbReference type="InterPro" id="IPR002082">
    <property type="entry name" value="Asp_carbamoyltransf"/>
</dbReference>
<dbReference type="InterPro" id="IPR006131">
    <property type="entry name" value="Asp_carbamoyltransf_Asp/Orn-bd"/>
</dbReference>
<dbReference type="NCBIfam" id="TIGR00670">
    <property type="entry name" value="asp_carb_tr"/>
    <property type="match status" value="1"/>
</dbReference>
<dbReference type="NCBIfam" id="NF002032">
    <property type="entry name" value="PRK00856.1"/>
    <property type="match status" value="1"/>
</dbReference>
<dbReference type="PANTHER" id="PTHR45753:SF6">
    <property type="entry name" value="ASPARTATE CARBAMOYLTRANSFERASE"/>
    <property type="match status" value="1"/>
</dbReference>
<dbReference type="PANTHER" id="PTHR45753">
    <property type="entry name" value="ORNITHINE CARBAMOYLTRANSFERASE, MITOCHONDRIAL"/>
    <property type="match status" value="1"/>
</dbReference>
<dbReference type="Pfam" id="PF00185">
    <property type="entry name" value="OTCace"/>
    <property type="match status" value="1"/>
</dbReference>
<dbReference type="Pfam" id="PF02729">
    <property type="entry name" value="OTCace_N"/>
    <property type="match status" value="1"/>
</dbReference>
<dbReference type="PRINTS" id="PR00100">
    <property type="entry name" value="AOTCASE"/>
</dbReference>
<dbReference type="PRINTS" id="PR00101">
    <property type="entry name" value="ATCASE"/>
</dbReference>
<dbReference type="SUPFAM" id="SSF53671">
    <property type="entry name" value="Aspartate/ornithine carbamoyltransferase"/>
    <property type="match status" value="1"/>
</dbReference>
<dbReference type="PROSITE" id="PS00097">
    <property type="entry name" value="CARBAMOYLTRANSFERASE"/>
    <property type="match status" value="1"/>
</dbReference>
<proteinExistence type="inferred from homology"/>
<feature type="chain" id="PRO_0000113101" description="Aspartate carbamoyltransferase catalytic subunit">
    <location>
        <begin position="1"/>
        <end position="321"/>
    </location>
</feature>
<feature type="binding site" evidence="1">
    <location>
        <position position="65"/>
    </location>
    <ligand>
        <name>carbamoyl phosphate</name>
        <dbReference type="ChEBI" id="CHEBI:58228"/>
    </ligand>
</feature>
<feature type="binding site" evidence="1">
    <location>
        <position position="66"/>
    </location>
    <ligand>
        <name>carbamoyl phosphate</name>
        <dbReference type="ChEBI" id="CHEBI:58228"/>
    </ligand>
</feature>
<feature type="binding site" evidence="1">
    <location>
        <position position="93"/>
    </location>
    <ligand>
        <name>L-aspartate</name>
        <dbReference type="ChEBI" id="CHEBI:29991"/>
    </ligand>
</feature>
<feature type="binding site" evidence="1">
    <location>
        <position position="115"/>
    </location>
    <ligand>
        <name>carbamoyl phosphate</name>
        <dbReference type="ChEBI" id="CHEBI:58228"/>
    </ligand>
</feature>
<feature type="binding site" evidence="1">
    <location>
        <position position="143"/>
    </location>
    <ligand>
        <name>carbamoyl phosphate</name>
        <dbReference type="ChEBI" id="CHEBI:58228"/>
    </ligand>
</feature>
<feature type="binding site" evidence="1">
    <location>
        <position position="146"/>
    </location>
    <ligand>
        <name>carbamoyl phosphate</name>
        <dbReference type="ChEBI" id="CHEBI:58228"/>
    </ligand>
</feature>
<feature type="binding site" evidence="1">
    <location>
        <position position="176"/>
    </location>
    <ligand>
        <name>L-aspartate</name>
        <dbReference type="ChEBI" id="CHEBI:29991"/>
    </ligand>
</feature>
<feature type="binding site" evidence="1">
    <location>
        <position position="230"/>
    </location>
    <ligand>
        <name>L-aspartate</name>
        <dbReference type="ChEBI" id="CHEBI:29991"/>
    </ligand>
</feature>
<feature type="binding site" evidence="1">
    <location>
        <position position="271"/>
    </location>
    <ligand>
        <name>carbamoyl phosphate</name>
        <dbReference type="ChEBI" id="CHEBI:58228"/>
    </ligand>
</feature>
<feature type="binding site" evidence="1">
    <location>
        <position position="272"/>
    </location>
    <ligand>
        <name>carbamoyl phosphate</name>
        <dbReference type="ChEBI" id="CHEBI:58228"/>
    </ligand>
</feature>
<keyword id="KW-0665">Pyrimidine biosynthesis</keyword>
<keyword id="KW-0808">Transferase</keyword>
<gene>
    <name evidence="1" type="primary">pyrB</name>
    <name type="ordered locus">BH08200</name>
</gene>
<sequence length="321" mass="34848">MTQNTFFSLFPHQHLLGIKDLSVQDLTILLDRANANVPFLKKSDKKQSILHGRTQINLFFEASTRTQSSFELAGKRLGADVMSMAIGNSSVKKGETLVDTATTLNAMKPDILVIRHSCAGAAALLAQKVDCCVINAGDGAHEHPTQALLDALTIQRTKGRIEGLTVAICGDILHSRVARSNILSLNALGACVRVIAPSTLLPASIADMSVEVYNTMKEGLKGADVIMMLRLQQERMTGSFIPSIREYFHYFGLHKENLAYAKSDCIILHPGPINRGVEIASDIADGPQSMIHTQVEMGIAVRMAVMEALLDSRLKASGEKK</sequence>
<reference key="1">
    <citation type="journal article" date="2004" name="Proc. Natl. Acad. Sci. U.S.A.">
        <title>The louse-borne human pathogen Bartonella quintana is a genomic derivative of the zoonotic agent Bartonella henselae.</title>
        <authorList>
            <person name="Alsmark U.C.M."/>
            <person name="Frank A.C."/>
            <person name="Karlberg E.O."/>
            <person name="Legault B.-A."/>
            <person name="Ardell D.H."/>
            <person name="Canbaeck B."/>
            <person name="Eriksson A.-S."/>
            <person name="Naeslund A.K."/>
            <person name="Handley S.A."/>
            <person name="Huvet M."/>
            <person name="La Scola B."/>
            <person name="Holmberg M."/>
            <person name="Andersson S.G.E."/>
        </authorList>
    </citation>
    <scope>NUCLEOTIDE SEQUENCE [LARGE SCALE GENOMIC DNA]</scope>
    <source>
        <strain>ATCC 49882 / DSM 28221 / CCUG 30454 / Houston 1</strain>
    </source>
</reference>
<evidence type="ECO:0000255" key="1">
    <source>
        <dbReference type="HAMAP-Rule" id="MF_00001"/>
    </source>
</evidence>
<protein>
    <recommendedName>
        <fullName evidence="1">Aspartate carbamoyltransferase catalytic subunit</fullName>
        <ecNumber evidence="1">2.1.3.2</ecNumber>
    </recommendedName>
    <alternativeName>
        <fullName evidence="1">Aspartate transcarbamylase</fullName>
        <shortName evidence="1">ATCase</shortName>
    </alternativeName>
</protein>
<name>PYRB_BARHE</name>
<comment type="function">
    <text evidence="1">Catalyzes the condensation of carbamoyl phosphate and aspartate to form carbamoyl aspartate and inorganic phosphate, the committed step in the de novo pyrimidine nucleotide biosynthesis pathway.</text>
</comment>
<comment type="catalytic activity">
    <reaction evidence="1">
        <text>carbamoyl phosphate + L-aspartate = N-carbamoyl-L-aspartate + phosphate + H(+)</text>
        <dbReference type="Rhea" id="RHEA:20013"/>
        <dbReference type="ChEBI" id="CHEBI:15378"/>
        <dbReference type="ChEBI" id="CHEBI:29991"/>
        <dbReference type="ChEBI" id="CHEBI:32814"/>
        <dbReference type="ChEBI" id="CHEBI:43474"/>
        <dbReference type="ChEBI" id="CHEBI:58228"/>
        <dbReference type="EC" id="2.1.3.2"/>
    </reaction>
</comment>
<comment type="pathway">
    <text evidence="1">Pyrimidine metabolism; UMP biosynthesis via de novo pathway; (S)-dihydroorotate from bicarbonate: step 2/3.</text>
</comment>
<comment type="subunit">
    <text evidence="1">Heterododecamer (2C3:3R2) of six catalytic PyrB chains organized as two trimers (C3), and six regulatory PyrI chains organized as three dimers (R2).</text>
</comment>
<comment type="similarity">
    <text evidence="1">Belongs to the aspartate/ornithine carbamoyltransferase superfamily. ATCase family.</text>
</comment>